<keyword id="KW-0067">ATP-binding</keyword>
<keyword id="KW-0460">Magnesium</keyword>
<keyword id="KW-0547">Nucleotide-binding</keyword>
<keyword id="KW-1185">Reference proteome</keyword>
<keyword id="KW-0808">Transferase</keyword>
<keyword id="KW-0819">tRNA processing</keyword>
<reference key="1">
    <citation type="submission" date="2007-02" db="EMBL/GenBank/DDBJ databases">
        <title>Complete sequence of Clostridium thermocellum ATCC 27405.</title>
        <authorList>
            <consortium name="US DOE Joint Genome Institute"/>
            <person name="Copeland A."/>
            <person name="Lucas S."/>
            <person name="Lapidus A."/>
            <person name="Barry K."/>
            <person name="Detter J.C."/>
            <person name="Glavina del Rio T."/>
            <person name="Hammon N."/>
            <person name="Israni S."/>
            <person name="Dalin E."/>
            <person name="Tice H."/>
            <person name="Pitluck S."/>
            <person name="Chertkov O."/>
            <person name="Brettin T."/>
            <person name="Bruce D."/>
            <person name="Han C."/>
            <person name="Tapia R."/>
            <person name="Gilna P."/>
            <person name="Schmutz J."/>
            <person name="Larimer F."/>
            <person name="Land M."/>
            <person name="Hauser L."/>
            <person name="Kyrpides N."/>
            <person name="Mikhailova N."/>
            <person name="Wu J.H.D."/>
            <person name="Newcomb M."/>
            <person name="Richardson P."/>
        </authorList>
    </citation>
    <scope>NUCLEOTIDE SEQUENCE [LARGE SCALE GENOMIC DNA]</scope>
    <source>
        <strain>ATCC 27405 / DSM 1237 / JCM 9322 / NBRC 103400 / NCIMB 10682 / NRRL B-4536 / VPI 7372</strain>
    </source>
</reference>
<evidence type="ECO:0000255" key="1">
    <source>
        <dbReference type="HAMAP-Rule" id="MF_00185"/>
    </source>
</evidence>
<dbReference type="EC" id="2.5.1.75" evidence="1"/>
<dbReference type="EMBL" id="CP000568">
    <property type="protein sequence ID" value="ABN52010.1"/>
    <property type="molecule type" value="Genomic_DNA"/>
</dbReference>
<dbReference type="RefSeq" id="WP_004463355.1">
    <property type="nucleotide sequence ID" value="NC_009012.1"/>
</dbReference>
<dbReference type="SMR" id="A3DDI1"/>
<dbReference type="STRING" id="203119.Cthe_0775"/>
<dbReference type="GeneID" id="35806116"/>
<dbReference type="KEGG" id="cth:Cthe_0775"/>
<dbReference type="eggNOG" id="COG0324">
    <property type="taxonomic scope" value="Bacteria"/>
</dbReference>
<dbReference type="HOGENOM" id="CLU_032616_0_1_9"/>
<dbReference type="OrthoDB" id="9776390at2"/>
<dbReference type="Proteomes" id="UP000002145">
    <property type="component" value="Chromosome"/>
</dbReference>
<dbReference type="GO" id="GO:0005524">
    <property type="term" value="F:ATP binding"/>
    <property type="evidence" value="ECO:0007669"/>
    <property type="project" value="UniProtKB-UniRule"/>
</dbReference>
<dbReference type="GO" id="GO:0052381">
    <property type="term" value="F:tRNA dimethylallyltransferase activity"/>
    <property type="evidence" value="ECO:0007669"/>
    <property type="project" value="UniProtKB-UniRule"/>
</dbReference>
<dbReference type="GO" id="GO:0006400">
    <property type="term" value="P:tRNA modification"/>
    <property type="evidence" value="ECO:0007669"/>
    <property type="project" value="TreeGrafter"/>
</dbReference>
<dbReference type="FunFam" id="1.10.20.140:FF:000001">
    <property type="entry name" value="tRNA dimethylallyltransferase"/>
    <property type="match status" value="1"/>
</dbReference>
<dbReference type="Gene3D" id="1.10.20.140">
    <property type="match status" value="1"/>
</dbReference>
<dbReference type="Gene3D" id="3.40.50.300">
    <property type="entry name" value="P-loop containing nucleotide triphosphate hydrolases"/>
    <property type="match status" value="1"/>
</dbReference>
<dbReference type="HAMAP" id="MF_00185">
    <property type="entry name" value="IPP_trans"/>
    <property type="match status" value="1"/>
</dbReference>
<dbReference type="InterPro" id="IPR039657">
    <property type="entry name" value="Dimethylallyltransferase"/>
</dbReference>
<dbReference type="InterPro" id="IPR018022">
    <property type="entry name" value="IPT"/>
</dbReference>
<dbReference type="InterPro" id="IPR027417">
    <property type="entry name" value="P-loop_NTPase"/>
</dbReference>
<dbReference type="NCBIfam" id="TIGR00174">
    <property type="entry name" value="miaA"/>
    <property type="match status" value="1"/>
</dbReference>
<dbReference type="PANTHER" id="PTHR11088">
    <property type="entry name" value="TRNA DIMETHYLALLYLTRANSFERASE"/>
    <property type="match status" value="1"/>
</dbReference>
<dbReference type="PANTHER" id="PTHR11088:SF60">
    <property type="entry name" value="TRNA DIMETHYLALLYLTRANSFERASE"/>
    <property type="match status" value="1"/>
</dbReference>
<dbReference type="Pfam" id="PF01715">
    <property type="entry name" value="IPPT"/>
    <property type="match status" value="1"/>
</dbReference>
<dbReference type="SUPFAM" id="SSF52540">
    <property type="entry name" value="P-loop containing nucleoside triphosphate hydrolases"/>
    <property type="match status" value="1"/>
</dbReference>
<protein>
    <recommendedName>
        <fullName evidence="1">tRNA dimethylallyltransferase</fullName>
        <ecNumber evidence="1">2.5.1.75</ecNumber>
    </recommendedName>
    <alternativeName>
        <fullName evidence="1">Dimethylallyl diphosphate:tRNA dimethylallyltransferase</fullName>
        <shortName evidence="1">DMAPP:tRNA dimethylallyltransferase</shortName>
        <shortName evidence="1">DMATase</shortName>
    </alternativeName>
    <alternativeName>
        <fullName evidence="1">Isopentenyl-diphosphate:tRNA isopentenyltransferase</fullName>
        <shortName evidence="1">IPP transferase</shortName>
        <shortName evidence="1">IPPT</shortName>
        <shortName evidence="1">IPTase</shortName>
    </alternativeName>
</protein>
<proteinExistence type="inferred from homology"/>
<name>MIAA_ACET2</name>
<sequence length="313" mass="36501">MDNVLVIIGPTASGKTKLAIEIAKRANGEIISADSMQIYKYMDIGTAKPDEEEKEGIKHYLIDEVTPDEEFSVARFKELALKYIDEILSKGKLPIVAGGTGLYINSLIYNLEFSDTICDWELRKKLEQEAKEKGNEYLHNKLKEIDPKAAEKIHMNNVKRVIRAIEVYTYTKKPISVHQEESRKNPPRHNFILIGITMDREKLYDRINKRVDLMLEKGLVKEVEKLVEMGYDKSTIAMQGLGYKEILSYLRGERSLDEAVEILKRDTRRYAKRQMTWFRKIENVYWINKDEFDSDEKIIKNLKYYLATFGIFL</sequence>
<feature type="chain" id="PRO_1000020590" description="tRNA dimethylallyltransferase">
    <location>
        <begin position="1"/>
        <end position="313"/>
    </location>
</feature>
<feature type="region of interest" description="Interaction with substrate tRNA" evidence="1">
    <location>
        <begin position="34"/>
        <end position="37"/>
    </location>
</feature>
<feature type="binding site" evidence="1">
    <location>
        <begin position="9"/>
        <end position="16"/>
    </location>
    <ligand>
        <name>ATP</name>
        <dbReference type="ChEBI" id="CHEBI:30616"/>
    </ligand>
</feature>
<feature type="binding site" evidence="1">
    <location>
        <begin position="11"/>
        <end position="16"/>
    </location>
    <ligand>
        <name>substrate</name>
    </ligand>
</feature>
<feature type="site" description="Interaction with substrate tRNA" evidence="1">
    <location>
        <position position="100"/>
    </location>
</feature>
<feature type="site" description="Interaction with substrate tRNA" evidence="1">
    <location>
        <position position="123"/>
    </location>
</feature>
<organism>
    <name type="scientific">Acetivibrio thermocellus (strain ATCC 27405 / DSM 1237 / JCM 9322 / NBRC 103400 / NCIMB 10682 / NRRL B-4536 / VPI 7372)</name>
    <name type="common">Clostridium thermocellum</name>
    <dbReference type="NCBI Taxonomy" id="203119"/>
    <lineage>
        <taxon>Bacteria</taxon>
        <taxon>Bacillati</taxon>
        <taxon>Bacillota</taxon>
        <taxon>Clostridia</taxon>
        <taxon>Eubacteriales</taxon>
        <taxon>Oscillospiraceae</taxon>
        <taxon>Acetivibrio</taxon>
    </lineage>
</organism>
<accession>A3DDI1</accession>
<comment type="function">
    <text evidence="1">Catalyzes the transfer of a dimethylallyl group onto the adenine at position 37 in tRNAs that read codons beginning with uridine, leading to the formation of N6-(dimethylallyl)adenosine (i(6)A).</text>
</comment>
<comment type="catalytic activity">
    <reaction evidence="1">
        <text>adenosine(37) in tRNA + dimethylallyl diphosphate = N(6)-dimethylallyladenosine(37) in tRNA + diphosphate</text>
        <dbReference type="Rhea" id="RHEA:26482"/>
        <dbReference type="Rhea" id="RHEA-COMP:10162"/>
        <dbReference type="Rhea" id="RHEA-COMP:10375"/>
        <dbReference type="ChEBI" id="CHEBI:33019"/>
        <dbReference type="ChEBI" id="CHEBI:57623"/>
        <dbReference type="ChEBI" id="CHEBI:74411"/>
        <dbReference type="ChEBI" id="CHEBI:74415"/>
        <dbReference type="EC" id="2.5.1.75"/>
    </reaction>
</comment>
<comment type="cofactor">
    <cofactor evidence="1">
        <name>Mg(2+)</name>
        <dbReference type="ChEBI" id="CHEBI:18420"/>
    </cofactor>
</comment>
<comment type="subunit">
    <text evidence="1">Monomer.</text>
</comment>
<comment type="similarity">
    <text evidence="1">Belongs to the IPP transferase family.</text>
</comment>
<gene>
    <name evidence="1" type="primary">miaA</name>
    <name type="ordered locus">Cthe_0775</name>
</gene>